<reference key="1">
    <citation type="journal article" date="2005" name="Science">
        <title>The transcriptional landscape of the mammalian genome.</title>
        <authorList>
            <person name="Carninci P."/>
            <person name="Kasukawa T."/>
            <person name="Katayama S."/>
            <person name="Gough J."/>
            <person name="Frith M.C."/>
            <person name="Maeda N."/>
            <person name="Oyama R."/>
            <person name="Ravasi T."/>
            <person name="Lenhard B."/>
            <person name="Wells C."/>
            <person name="Kodzius R."/>
            <person name="Shimokawa K."/>
            <person name="Bajic V.B."/>
            <person name="Brenner S.E."/>
            <person name="Batalov S."/>
            <person name="Forrest A.R."/>
            <person name="Zavolan M."/>
            <person name="Davis M.J."/>
            <person name="Wilming L.G."/>
            <person name="Aidinis V."/>
            <person name="Allen J.E."/>
            <person name="Ambesi-Impiombato A."/>
            <person name="Apweiler R."/>
            <person name="Aturaliya R.N."/>
            <person name="Bailey T.L."/>
            <person name="Bansal M."/>
            <person name="Baxter L."/>
            <person name="Beisel K.W."/>
            <person name="Bersano T."/>
            <person name="Bono H."/>
            <person name="Chalk A.M."/>
            <person name="Chiu K.P."/>
            <person name="Choudhary V."/>
            <person name="Christoffels A."/>
            <person name="Clutterbuck D.R."/>
            <person name="Crowe M.L."/>
            <person name="Dalla E."/>
            <person name="Dalrymple B.P."/>
            <person name="de Bono B."/>
            <person name="Della Gatta G."/>
            <person name="di Bernardo D."/>
            <person name="Down T."/>
            <person name="Engstrom P."/>
            <person name="Fagiolini M."/>
            <person name="Faulkner G."/>
            <person name="Fletcher C.F."/>
            <person name="Fukushima T."/>
            <person name="Furuno M."/>
            <person name="Futaki S."/>
            <person name="Gariboldi M."/>
            <person name="Georgii-Hemming P."/>
            <person name="Gingeras T.R."/>
            <person name="Gojobori T."/>
            <person name="Green R.E."/>
            <person name="Gustincich S."/>
            <person name="Harbers M."/>
            <person name="Hayashi Y."/>
            <person name="Hensch T.K."/>
            <person name="Hirokawa N."/>
            <person name="Hill D."/>
            <person name="Huminiecki L."/>
            <person name="Iacono M."/>
            <person name="Ikeo K."/>
            <person name="Iwama A."/>
            <person name="Ishikawa T."/>
            <person name="Jakt M."/>
            <person name="Kanapin A."/>
            <person name="Katoh M."/>
            <person name="Kawasawa Y."/>
            <person name="Kelso J."/>
            <person name="Kitamura H."/>
            <person name="Kitano H."/>
            <person name="Kollias G."/>
            <person name="Krishnan S.P."/>
            <person name="Kruger A."/>
            <person name="Kummerfeld S.K."/>
            <person name="Kurochkin I.V."/>
            <person name="Lareau L.F."/>
            <person name="Lazarevic D."/>
            <person name="Lipovich L."/>
            <person name="Liu J."/>
            <person name="Liuni S."/>
            <person name="McWilliam S."/>
            <person name="Madan Babu M."/>
            <person name="Madera M."/>
            <person name="Marchionni L."/>
            <person name="Matsuda H."/>
            <person name="Matsuzawa S."/>
            <person name="Miki H."/>
            <person name="Mignone F."/>
            <person name="Miyake S."/>
            <person name="Morris K."/>
            <person name="Mottagui-Tabar S."/>
            <person name="Mulder N."/>
            <person name="Nakano N."/>
            <person name="Nakauchi H."/>
            <person name="Ng P."/>
            <person name="Nilsson R."/>
            <person name="Nishiguchi S."/>
            <person name="Nishikawa S."/>
            <person name="Nori F."/>
            <person name="Ohara O."/>
            <person name="Okazaki Y."/>
            <person name="Orlando V."/>
            <person name="Pang K.C."/>
            <person name="Pavan W.J."/>
            <person name="Pavesi G."/>
            <person name="Pesole G."/>
            <person name="Petrovsky N."/>
            <person name="Piazza S."/>
            <person name="Reed J."/>
            <person name="Reid J.F."/>
            <person name="Ring B.Z."/>
            <person name="Ringwald M."/>
            <person name="Rost B."/>
            <person name="Ruan Y."/>
            <person name="Salzberg S.L."/>
            <person name="Sandelin A."/>
            <person name="Schneider C."/>
            <person name="Schoenbach C."/>
            <person name="Sekiguchi K."/>
            <person name="Semple C.A."/>
            <person name="Seno S."/>
            <person name="Sessa L."/>
            <person name="Sheng Y."/>
            <person name="Shibata Y."/>
            <person name="Shimada H."/>
            <person name="Shimada K."/>
            <person name="Silva D."/>
            <person name="Sinclair B."/>
            <person name="Sperling S."/>
            <person name="Stupka E."/>
            <person name="Sugiura K."/>
            <person name="Sultana R."/>
            <person name="Takenaka Y."/>
            <person name="Taki K."/>
            <person name="Tammoja K."/>
            <person name="Tan S.L."/>
            <person name="Tang S."/>
            <person name="Taylor M.S."/>
            <person name="Tegner J."/>
            <person name="Teichmann S.A."/>
            <person name="Ueda H.R."/>
            <person name="van Nimwegen E."/>
            <person name="Verardo R."/>
            <person name="Wei C.L."/>
            <person name="Yagi K."/>
            <person name="Yamanishi H."/>
            <person name="Zabarovsky E."/>
            <person name="Zhu S."/>
            <person name="Zimmer A."/>
            <person name="Hide W."/>
            <person name="Bult C."/>
            <person name="Grimmond S.M."/>
            <person name="Teasdale R.D."/>
            <person name="Liu E.T."/>
            <person name="Brusic V."/>
            <person name="Quackenbush J."/>
            <person name="Wahlestedt C."/>
            <person name="Mattick J.S."/>
            <person name="Hume D.A."/>
            <person name="Kai C."/>
            <person name="Sasaki D."/>
            <person name="Tomaru Y."/>
            <person name="Fukuda S."/>
            <person name="Kanamori-Katayama M."/>
            <person name="Suzuki M."/>
            <person name="Aoki J."/>
            <person name="Arakawa T."/>
            <person name="Iida J."/>
            <person name="Imamura K."/>
            <person name="Itoh M."/>
            <person name="Kato T."/>
            <person name="Kawaji H."/>
            <person name="Kawagashira N."/>
            <person name="Kawashima T."/>
            <person name="Kojima M."/>
            <person name="Kondo S."/>
            <person name="Konno H."/>
            <person name="Nakano K."/>
            <person name="Ninomiya N."/>
            <person name="Nishio T."/>
            <person name="Okada M."/>
            <person name="Plessy C."/>
            <person name="Shibata K."/>
            <person name="Shiraki T."/>
            <person name="Suzuki S."/>
            <person name="Tagami M."/>
            <person name="Waki K."/>
            <person name="Watahiki A."/>
            <person name="Okamura-Oho Y."/>
            <person name="Suzuki H."/>
            <person name="Kawai J."/>
            <person name="Hayashizaki Y."/>
        </authorList>
    </citation>
    <scope>NUCLEOTIDE SEQUENCE [LARGE SCALE MRNA]</scope>
    <source>
        <strain>C57BL/6J</strain>
        <tissue>Corpora quadrigemina</tissue>
    </source>
</reference>
<reference key="2">
    <citation type="journal article" date="2004" name="Genome Res.">
        <title>The status, quality, and expansion of the NIH full-length cDNA project: the Mammalian Gene Collection (MGC).</title>
        <authorList>
            <consortium name="The MGC Project Team"/>
        </authorList>
    </citation>
    <scope>NUCLEOTIDE SEQUENCE [LARGE SCALE MRNA]</scope>
    <source>
        <strain>C57BL/6J</strain>
        <tissue>Brain</tissue>
    </source>
</reference>
<reference key="3">
    <citation type="journal article" date="2010" name="Cell">
        <title>A tissue-specific atlas of mouse protein phosphorylation and expression.</title>
        <authorList>
            <person name="Huttlin E.L."/>
            <person name="Jedrychowski M.P."/>
            <person name="Elias J.E."/>
            <person name="Goswami T."/>
            <person name="Rad R."/>
            <person name="Beausoleil S.A."/>
            <person name="Villen J."/>
            <person name="Haas W."/>
            <person name="Sowa M.E."/>
            <person name="Gygi S.P."/>
        </authorList>
    </citation>
    <scope>PHOSPHORYLATION [LARGE SCALE ANALYSIS] AT SER-34</scope>
    <scope>IDENTIFICATION BY MASS SPECTROMETRY [LARGE SCALE ANALYSIS]</scope>
    <source>
        <tissue>Testis</tissue>
    </source>
</reference>
<name>CF119_MOUSE</name>
<organism>
    <name type="scientific">Mus musculus</name>
    <name type="common">Mouse</name>
    <dbReference type="NCBI Taxonomy" id="10090"/>
    <lineage>
        <taxon>Eukaryota</taxon>
        <taxon>Metazoa</taxon>
        <taxon>Chordata</taxon>
        <taxon>Craniata</taxon>
        <taxon>Vertebrata</taxon>
        <taxon>Euteleostomi</taxon>
        <taxon>Mammalia</taxon>
        <taxon>Eutheria</taxon>
        <taxon>Euarchontoglires</taxon>
        <taxon>Glires</taxon>
        <taxon>Rodentia</taxon>
        <taxon>Myomorpha</taxon>
        <taxon>Muroidea</taxon>
        <taxon>Muridae</taxon>
        <taxon>Murinae</taxon>
        <taxon>Mus</taxon>
        <taxon>Mus</taxon>
    </lineage>
</organism>
<evidence type="ECO:0000250" key="1">
    <source>
        <dbReference type="UniProtKB" id="A1A4V9"/>
    </source>
</evidence>
<evidence type="ECO:0000250" key="2">
    <source>
        <dbReference type="UniProtKB" id="B0BMZ6"/>
    </source>
</evidence>
<evidence type="ECO:0000255" key="3"/>
<evidence type="ECO:0000256" key="4">
    <source>
        <dbReference type="SAM" id="MobiDB-lite"/>
    </source>
</evidence>
<evidence type="ECO:0000305" key="5"/>
<evidence type="ECO:0000312" key="6">
    <source>
        <dbReference type="EMBL" id="AAH66021.2"/>
    </source>
</evidence>
<evidence type="ECO:0000312" key="7">
    <source>
        <dbReference type="MGI" id="MGI:2685012"/>
    </source>
</evidence>
<evidence type="ECO:0007744" key="8">
    <source>
    </source>
</evidence>
<feature type="chain" id="PRO_0000321843" description="Cilia- and flagella-associated protein 119">
    <location>
        <begin position="1"/>
        <end position="333"/>
    </location>
</feature>
<feature type="region of interest" description="Disordered" evidence="4">
    <location>
        <begin position="1"/>
        <end position="70"/>
    </location>
</feature>
<feature type="region of interest" description="Disordered" evidence="4">
    <location>
        <begin position="309"/>
        <end position="333"/>
    </location>
</feature>
<feature type="coiled-coil region" evidence="3">
    <location>
        <begin position="284"/>
        <end position="319"/>
    </location>
</feature>
<feature type="compositionally biased region" description="Polar residues" evidence="4">
    <location>
        <begin position="1"/>
        <end position="10"/>
    </location>
</feature>
<feature type="compositionally biased region" description="Polar residues" evidence="4">
    <location>
        <begin position="44"/>
        <end position="58"/>
    </location>
</feature>
<feature type="modified residue" description="Phosphoserine" evidence="8">
    <location>
        <position position="34"/>
    </location>
</feature>
<gene>
    <name evidence="1" type="primary">Cfap119</name>
    <name evidence="7" type="synonym">Ccdc189</name>
    <name evidence="6" type="synonym">Gm166</name>
</gene>
<protein>
    <recommendedName>
        <fullName evidence="5">Cilia- and flagella-associated protein 119</fullName>
    </recommendedName>
    <alternativeName>
        <fullName evidence="7">Coiled-coil domain-containing protein 189</fullName>
    </alternativeName>
</protein>
<proteinExistence type="evidence at protein level"/>
<sequence>MITPSSSQSLGMKVQMESEQSPKLQEELDRSPSSVDGSAIRNGTDMQTESPAEATSSPVEVAEDPGANLFPPPLPQPRICMWKYLDIHSMHRLEKAATVEKMREVLAELLELGFPEQSLRDAIILDLFSHALIFCRQQGFSPEQTSAACAMLQDLHKACVATPLGNVEECYRYFTSVLFCHGIRRPPFSIDLFKEEQLLALADYVVNTYFRHFKLYKYVFTPQVRLDLSLTYTGLQPLTLWPEEKENEEMMVVEQVATPQEEEPETVTEPEQQPSEVCILQTYIKSQLSKELRQLQQLVEERLKESEERLSSKLAALEQPFQTPPSKGKTKTK</sequence>
<dbReference type="EMBL" id="AK140121">
    <property type="protein sequence ID" value="BAE24243.1"/>
    <property type="molecule type" value="mRNA"/>
</dbReference>
<dbReference type="EMBL" id="BC066021">
    <property type="protein sequence ID" value="AAH66021.2"/>
    <property type="molecule type" value="mRNA"/>
</dbReference>
<dbReference type="CCDS" id="CCDS21870.1"/>
<dbReference type="RefSeq" id="NP_001028212.1">
    <property type="nucleotide sequence ID" value="NM_001033040.4"/>
</dbReference>
<dbReference type="SMR" id="Q6NZQ0"/>
<dbReference type="FunCoup" id="Q6NZQ0">
    <property type="interactions" value="17"/>
</dbReference>
<dbReference type="STRING" id="10090.ENSMUSP00000072019"/>
<dbReference type="iPTMnet" id="Q6NZQ0"/>
<dbReference type="PhosphoSitePlus" id="Q6NZQ0"/>
<dbReference type="SwissPalm" id="Q6NZQ0"/>
<dbReference type="PaxDb" id="10090-ENSMUSP00000072019"/>
<dbReference type="ProteomicsDB" id="265300"/>
<dbReference type="Antibodypedia" id="66032">
    <property type="antibodies" value="36 antibodies from 12 providers"/>
</dbReference>
<dbReference type="Ensembl" id="ENSMUST00000072155.5">
    <property type="protein sequence ID" value="ENSMUSP00000072019.4"/>
    <property type="gene ID" value="ENSMUSG00000057176.5"/>
</dbReference>
<dbReference type="GeneID" id="233899"/>
<dbReference type="KEGG" id="mmu:233899"/>
<dbReference type="UCSC" id="uc009jwd.2">
    <property type="organism name" value="mouse"/>
</dbReference>
<dbReference type="AGR" id="MGI:2685012"/>
<dbReference type="CTD" id="90835"/>
<dbReference type="MGI" id="MGI:2685012">
    <property type="gene designation" value="Cfap119"/>
</dbReference>
<dbReference type="VEuPathDB" id="HostDB:ENSMUSG00000057176"/>
<dbReference type="eggNOG" id="ENOG502RXPT">
    <property type="taxonomic scope" value="Eukaryota"/>
</dbReference>
<dbReference type="GeneTree" id="ENSGT00940000154323"/>
<dbReference type="HOGENOM" id="CLU_073614_0_0_1"/>
<dbReference type="InParanoid" id="Q6NZQ0"/>
<dbReference type="OMA" id="QTYIKTQ"/>
<dbReference type="OrthoDB" id="425082at2759"/>
<dbReference type="PhylomeDB" id="Q6NZQ0"/>
<dbReference type="TreeFam" id="TF343725"/>
<dbReference type="BioGRID-ORCS" id="233899">
    <property type="hits" value="0 hits in 37 CRISPR screens"/>
</dbReference>
<dbReference type="PRO" id="PR:Q6NZQ0"/>
<dbReference type="Proteomes" id="UP000000589">
    <property type="component" value="Chromosome 7"/>
</dbReference>
<dbReference type="RNAct" id="Q6NZQ0">
    <property type="molecule type" value="protein"/>
</dbReference>
<dbReference type="Bgee" id="ENSMUSG00000057176">
    <property type="expression patterns" value="Expressed in seminiferous tubule of testis and 122 other cell types or tissues"/>
</dbReference>
<dbReference type="ExpressionAtlas" id="Q6NZQ0">
    <property type="expression patterns" value="baseline and differential"/>
</dbReference>
<dbReference type="GO" id="GO:0001669">
    <property type="term" value="C:acrosomal vesicle"/>
    <property type="evidence" value="ECO:0000250"/>
    <property type="project" value="UniProtKB"/>
</dbReference>
<dbReference type="GO" id="GO:0005930">
    <property type="term" value="C:axoneme"/>
    <property type="evidence" value="ECO:0000314"/>
    <property type="project" value="MGI"/>
</dbReference>
<dbReference type="GO" id="GO:0005737">
    <property type="term" value="C:cytoplasm"/>
    <property type="evidence" value="ECO:0000250"/>
    <property type="project" value="UniProtKB"/>
</dbReference>
<dbReference type="GO" id="GO:0001534">
    <property type="term" value="C:radial spoke"/>
    <property type="evidence" value="ECO:0000314"/>
    <property type="project" value="MGI"/>
</dbReference>
<dbReference type="GO" id="GO:0097228">
    <property type="term" value="C:sperm principal piece"/>
    <property type="evidence" value="ECO:0000250"/>
    <property type="project" value="UniProtKB"/>
</dbReference>
<dbReference type="GO" id="GO:0010467">
    <property type="term" value="P:gene expression"/>
    <property type="evidence" value="ECO:0000315"/>
    <property type="project" value="MGI"/>
</dbReference>
<dbReference type="GO" id="GO:0007338">
    <property type="term" value="P:single fertilization"/>
    <property type="evidence" value="ECO:0000315"/>
    <property type="project" value="MGI"/>
</dbReference>
<dbReference type="GO" id="GO:0120316">
    <property type="term" value="P:sperm flagellum assembly"/>
    <property type="evidence" value="ECO:0000315"/>
    <property type="project" value="MGI"/>
</dbReference>
<dbReference type="InterPro" id="IPR032727">
    <property type="entry name" value="CLAMP"/>
</dbReference>
<dbReference type="PANTHER" id="PTHR28457:SF1">
    <property type="entry name" value="CILIA- AND FLAGELLA-ASSOCIATED PROTEIN 119"/>
    <property type="match status" value="1"/>
</dbReference>
<dbReference type="PANTHER" id="PTHR28457">
    <property type="entry name" value="COILED-COIL DOMAIN-CONTAINING PROTEIN 189"/>
    <property type="match status" value="1"/>
</dbReference>
<dbReference type="Pfam" id="PF14769">
    <property type="entry name" value="CLAMP"/>
    <property type="match status" value="1"/>
</dbReference>
<comment type="subcellular location">
    <subcellularLocation>
        <location evidence="2">Cell projection</location>
        <location evidence="2">Cilium</location>
        <location evidence="2">Flagellum</location>
    </subcellularLocation>
    <subcellularLocation>
        <location evidence="2">Cytoplasmic vesicle</location>
        <location evidence="2">Secretory vesicle</location>
        <location evidence="2">Acrosome</location>
    </subcellularLocation>
    <subcellularLocation>
        <location evidence="2">Cytoplasm</location>
    </subcellularLocation>
    <text evidence="2">In elongated spermatids, enriched in the principal piece of flagella where it is peri-axonemal. Disappears from sperm heads upon acrosome reaction.</text>
</comment>
<keyword id="KW-0966">Cell projection</keyword>
<keyword id="KW-0969">Cilium</keyword>
<keyword id="KW-0175">Coiled coil</keyword>
<keyword id="KW-0963">Cytoplasm</keyword>
<keyword id="KW-0968">Cytoplasmic vesicle</keyword>
<keyword id="KW-0282">Flagellum</keyword>
<keyword id="KW-0597">Phosphoprotein</keyword>
<keyword id="KW-1185">Reference proteome</keyword>
<accession>Q6NZQ0</accession>
<accession>Q3UST8</accession>